<protein>
    <recommendedName>
        <fullName evidence="1">Regulatory protein ViaA</fullName>
    </recommendedName>
    <alternativeName>
        <fullName evidence="1">VWA interacting with AAA+ ATPase</fullName>
    </alternativeName>
</protein>
<dbReference type="EMBL" id="CP000026">
    <property type="protein sequence ID" value="AAV79509.1"/>
    <property type="molecule type" value="Genomic_DNA"/>
</dbReference>
<dbReference type="RefSeq" id="WP_000956597.1">
    <property type="nucleotide sequence ID" value="NC_006511.1"/>
</dbReference>
<dbReference type="SMR" id="Q5PJX9"/>
<dbReference type="KEGG" id="spt:SPA3717"/>
<dbReference type="HOGENOM" id="CLU_022130_0_0_6"/>
<dbReference type="Proteomes" id="UP000008185">
    <property type="component" value="Chromosome"/>
</dbReference>
<dbReference type="GO" id="GO:0005829">
    <property type="term" value="C:cytosol"/>
    <property type="evidence" value="ECO:0007669"/>
    <property type="project" value="TreeGrafter"/>
</dbReference>
<dbReference type="CDD" id="cd01462">
    <property type="entry name" value="VWA_YIEM_type"/>
    <property type="match status" value="1"/>
</dbReference>
<dbReference type="Gene3D" id="3.40.50.410">
    <property type="entry name" value="von Willebrand factor, type A domain"/>
    <property type="match status" value="1"/>
</dbReference>
<dbReference type="HAMAP" id="MF_01626">
    <property type="entry name" value="ViaA"/>
    <property type="match status" value="1"/>
</dbReference>
<dbReference type="InterPro" id="IPR008912">
    <property type="entry name" value="Uncharacterised_CoxE"/>
</dbReference>
<dbReference type="InterPro" id="IPR023481">
    <property type="entry name" value="Uncharacterised_ViaA"/>
</dbReference>
<dbReference type="InterPro" id="IPR002035">
    <property type="entry name" value="VWF_A"/>
</dbReference>
<dbReference type="InterPro" id="IPR036465">
    <property type="entry name" value="vWFA_dom_sf"/>
</dbReference>
<dbReference type="NCBIfam" id="NF008230">
    <property type="entry name" value="PRK10997.1"/>
    <property type="match status" value="1"/>
</dbReference>
<dbReference type="PANTHER" id="PTHR36846">
    <property type="entry name" value="PROTEIN VIAA"/>
    <property type="match status" value="1"/>
</dbReference>
<dbReference type="PANTHER" id="PTHR36846:SF1">
    <property type="entry name" value="PROTEIN VIAA"/>
    <property type="match status" value="1"/>
</dbReference>
<dbReference type="Pfam" id="PF05762">
    <property type="entry name" value="VWA_CoxE"/>
    <property type="match status" value="1"/>
</dbReference>
<dbReference type="SMART" id="SM00327">
    <property type="entry name" value="VWA"/>
    <property type="match status" value="1"/>
</dbReference>
<dbReference type="SUPFAM" id="SSF53300">
    <property type="entry name" value="vWA-like"/>
    <property type="match status" value="1"/>
</dbReference>
<evidence type="ECO:0000255" key="1">
    <source>
        <dbReference type="HAMAP-Rule" id="MF_01626"/>
    </source>
</evidence>
<accession>Q5PJX9</accession>
<feature type="chain" id="PRO_0000196588" description="Regulatory protein ViaA">
    <location>
        <begin position="1"/>
        <end position="483"/>
    </location>
</feature>
<comment type="function">
    <text evidence="1">Component of the RavA-ViaA chaperone complex, which may act on the membrane to optimize the function of some of the respiratory chains. ViaA stimulates the ATPase activity of RavA.</text>
</comment>
<comment type="subunit">
    <text evidence="1">Homodimer. Interacts with RavA.</text>
</comment>
<comment type="subcellular location">
    <subcellularLocation>
        <location evidence="1">Cytoplasm</location>
    </subcellularLocation>
</comment>
<comment type="similarity">
    <text evidence="1">Belongs to the ViaA family.</text>
</comment>
<keyword id="KW-0143">Chaperone</keyword>
<keyword id="KW-0963">Cytoplasm</keyword>
<name>VIAA_SALPA</name>
<sequence length="483" mass="55434">MLTLDTLNTMLAVSEEGMVEEMILALLASPQLVIFFEKFPRLKNAVTADLTRWREALRSRLKDARVPPELTEEVMCYQQSQLLSTPQFIVQLPQILALLHRLHSPYAAQAKQLTESNSTFTPALHTLFLQRWRLSLVVQATTLNQQLLEEEREQLLSDVQERMTLSGQLEPTLAENDNAAGRLWDMSAGQLKRGDYQLIVKYGEFLAAQPELMQLAEQLGRSREAKSVPKKDAPMETFRTLVREPATVPEQVDGIQQGDDILRLLPPELATLGITELEYEFYRRLVEKQLLTYRLHGEAWREKVTERPVVHQDVDEQPRGPFIVCVDTSGSMGGFNEQCAKAFCLALMRVALADNRRCFIMLFSTDVVRYELSGPEGIEQAIRFLSQRFRGGTDIASCFRAIIERMQGREWFDADAVVISDFIAQRLPDDVVSKVGELQRLHQHRFHAVAMSAHGKPGIMRIFNHIWRFDTGMRSRLLRRWRR</sequence>
<gene>
    <name evidence="1" type="primary">viaA</name>
    <name type="ordered locus">SPA3717</name>
</gene>
<reference key="1">
    <citation type="journal article" date="2004" name="Nat. Genet.">
        <title>Comparison of genome degradation in Paratyphi A and Typhi, human-restricted serovars of Salmonella enterica that cause typhoid.</title>
        <authorList>
            <person name="McClelland M."/>
            <person name="Sanderson K.E."/>
            <person name="Clifton S.W."/>
            <person name="Latreille P."/>
            <person name="Porwollik S."/>
            <person name="Sabo A."/>
            <person name="Meyer R."/>
            <person name="Bieri T."/>
            <person name="Ozersky P."/>
            <person name="McLellan M."/>
            <person name="Harkins C.R."/>
            <person name="Wang C."/>
            <person name="Nguyen C."/>
            <person name="Berghoff A."/>
            <person name="Elliott G."/>
            <person name="Kohlberg S."/>
            <person name="Strong C."/>
            <person name="Du F."/>
            <person name="Carter J."/>
            <person name="Kremizki C."/>
            <person name="Layman D."/>
            <person name="Leonard S."/>
            <person name="Sun H."/>
            <person name="Fulton L."/>
            <person name="Nash W."/>
            <person name="Miner T."/>
            <person name="Minx P."/>
            <person name="Delehaunty K."/>
            <person name="Fronick C."/>
            <person name="Magrini V."/>
            <person name="Nhan M."/>
            <person name="Warren W."/>
            <person name="Florea L."/>
            <person name="Spieth J."/>
            <person name="Wilson R.K."/>
        </authorList>
    </citation>
    <scope>NUCLEOTIDE SEQUENCE [LARGE SCALE GENOMIC DNA]</scope>
    <source>
        <strain>ATCC 9150 / SARB42</strain>
    </source>
</reference>
<organism>
    <name type="scientific">Salmonella paratyphi A (strain ATCC 9150 / SARB42)</name>
    <dbReference type="NCBI Taxonomy" id="295319"/>
    <lineage>
        <taxon>Bacteria</taxon>
        <taxon>Pseudomonadati</taxon>
        <taxon>Pseudomonadota</taxon>
        <taxon>Gammaproteobacteria</taxon>
        <taxon>Enterobacterales</taxon>
        <taxon>Enterobacteriaceae</taxon>
        <taxon>Salmonella</taxon>
    </lineage>
</organism>
<proteinExistence type="inferred from homology"/>